<accession>P99086</accession>
<accession>P45553</accession>
<keyword id="KW-0143">Chaperone</keyword>
<keyword id="KW-0963">Cytoplasm</keyword>
<keyword id="KW-0346">Stress response</keyword>
<comment type="function">
    <text evidence="1">Participates actively in the response to hyperosmotic and heat shock by preventing the aggregation of stress-denatured proteins, in association with DnaK and GrpE. It is the nucleotide exchange factor for DnaK and may function as a thermosensor. Unfolded proteins bind initially to DnaJ; upon interaction with the DnaJ-bound protein, DnaK hydrolyzes its bound ATP, resulting in the formation of a stable complex. GrpE releases ADP from DnaK; ATP binding to DnaK triggers the release of the substrate protein, thus completing the reaction cycle. Several rounds of ATP-dependent interactions between DnaJ, DnaK and GrpE are required for fully efficient folding.</text>
</comment>
<comment type="subunit">
    <text evidence="1">Homodimer.</text>
</comment>
<comment type="subcellular location">
    <subcellularLocation>
        <location evidence="1">Cytoplasm</location>
    </subcellularLocation>
</comment>
<comment type="similarity">
    <text evidence="1">Belongs to the GrpE family.</text>
</comment>
<sequence length="208" mass="24022">MTNKDESVEKNTESTVEETNIKQNIDDSVEQAEESKGHLQDEAIEETSDENVIEEIDPKDQKINELQQLADENEEKYLRLYAEFENYKRRIQKENEINKTYQAQRVLTDILPAIDNIERALQIEGDDETFKSLQKGVQMVHESLINALKDNGLEVIKTEGEAFDPNIHQAVVQDDNPDFESGEITQELQKGYKLKDRVLRPSMVKVNQ</sequence>
<reference key="1">
    <citation type="journal article" date="2001" name="Lancet">
        <title>Whole genome sequencing of meticillin-resistant Staphylococcus aureus.</title>
        <authorList>
            <person name="Kuroda M."/>
            <person name="Ohta T."/>
            <person name="Uchiyama I."/>
            <person name="Baba T."/>
            <person name="Yuzawa H."/>
            <person name="Kobayashi I."/>
            <person name="Cui L."/>
            <person name="Oguchi A."/>
            <person name="Aoki K."/>
            <person name="Nagai Y."/>
            <person name="Lian J.-Q."/>
            <person name="Ito T."/>
            <person name="Kanamori M."/>
            <person name="Matsumaru H."/>
            <person name="Maruyama A."/>
            <person name="Murakami H."/>
            <person name="Hosoyama A."/>
            <person name="Mizutani-Ui Y."/>
            <person name="Takahashi N.K."/>
            <person name="Sawano T."/>
            <person name="Inoue R."/>
            <person name="Kaito C."/>
            <person name="Sekimizu K."/>
            <person name="Hirakawa H."/>
            <person name="Kuhara S."/>
            <person name="Goto S."/>
            <person name="Yabuzaki J."/>
            <person name="Kanehisa M."/>
            <person name="Yamashita A."/>
            <person name="Oshima K."/>
            <person name="Furuya K."/>
            <person name="Yoshino C."/>
            <person name="Shiba T."/>
            <person name="Hattori M."/>
            <person name="Ogasawara N."/>
            <person name="Hayashi H."/>
            <person name="Hiramatsu K."/>
        </authorList>
    </citation>
    <scope>NUCLEOTIDE SEQUENCE [LARGE SCALE GENOMIC DNA]</scope>
    <source>
        <strain>N315</strain>
    </source>
</reference>
<reference key="2">
    <citation type="journal article" date="2005" name="J. Microbiol. Methods">
        <title>Correlation of proteomic and transcriptomic profiles of Staphylococcus aureus during the post-exponential phase of growth.</title>
        <authorList>
            <person name="Scherl A."/>
            <person name="Francois P."/>
            <person name="Bento M."/>
            <person name="Deshusses J.M."/>
            <person name="Charbonnier Y."/>
            <person name="Converset V."/>
            <person name="Huyghe A."/>
            <person name="Walter N."/>
            <person name="Hoogland C."/>
            <person name="Appel R.D."/>
            <person name="Sanchez J.-C."/>
            <person name="Zimmermann-Ivol C.G."/>
            <person name="Corthals G.L."/>
            <person name="Hochstrasser D.F."/>
            <person name="Schrenzel J."/>
        </authorList>
    </citation>
    <scope>IDENTIFICATION BY MASS SPECTROMETRY</scope>
    <source>
        <strain>N315</strain>
    </source>
</reference>
<reference key="3">
    <citation type="submission" date="2007-10" db="UniProtKB">
        <title>Shotgun proteomic analysis of total and membrane protein extracts of S. aureus strain N315.</title>
        <authorList>
            <person name="Vaezzadeh A.R."/>
            <person name="Deshusses J."/>
            <person name="Lescuyer P."/>
            <person name="Hochstrasser D.F."/>
        </authorList>
    </citation>
    <scope>IDENTIFICATION BY MASS SPECTROMETRY [LARGE SCALE ANALYSIS]</scope>
    <source>
        <strain>N315</strain>
    </source>
</reference>
<proteinExistence type="evidence at protein level"/>
<feature type="chain" id="PRO_0000113856" description="Protein GrpE">
    <location>
        <begin position="1"/>
        <end position="208"/>
    </location>
</feature>
<feature type="region of interest" description="Disordered" evidence="2">
    <location>
        <begin position="1"/>
        <end position="59"/>
    </location>
</feature>
<feature type="compositionally biased region" description="Basic and acidic residues" evidence="2">
    <location>
        <begin position="1"/>
        <end position="12"/>
    </location>
</feature>
<feature type="compositionally biased region" description="Polar residues" evidence="2">
    <location>
        <begin position="13"/>
        <end position="23"/>
    </location>
</feature>
<feature type="compositionally biased region" description="Acidic residues" evidence="2">
    <location>
        <begin position="42"/>
        <end position="55"/>
    </location>
</feature>
<organism>
    <name type="scientific">Staphylococcus aureus (strain N315)</name>
    <dbReference type="NCBI Taxonomy" id="158879"/>
    <lineage>
        <taxon>Bacteria</taxon>
        <taxon>Bacillati</taxon>
        <taxon>Bacillota</taxon>
        <taxon>Bacilli</taxon>
        <taxon>Bacillales</taxon>
        <taxon>Staphylococcaceae</taxon>
        <taxon>Staphylococcus</taxon>
    </lineage>
</organism>
<dbReference type="EMBL" id="BA000018">
    <property type="protein sequence ID" value="BAB42673.1"/>
    <property type="molecule type" value="Genomic_DNA"/>
</dbReference>
<dbReference type="PIR" id="D89939">
    <property type="entry name" value="D89939"/>
</dbReference>
<dbReference type="RefSeq" id="WP_000182211.1">
    <property type="nucleotide sequence ID" value="NC_002745.2"/>
</dbReference>
<dbReference type="SMR" id="P99086"/>
<dbReference type="EnsemblBacteria" id="BAB42673">
    <property type="protein sequence ID" value="BAB42673"/>
    <property type="gene ID" value="BAB42673"/>
</dbReference>
<dbReference type="KEGG" id="sau:SA1410"/>
<dbReference type="HOGENOM" id="CLU_057217_6_3_9"/>
<dbReference type="GO" id="GO:0005737">
    <property type="term" value="C:cytoplasm"/>
    <property type="evidence" value="ECO:0007669"/>
    <property type="project" value="UniProtKB-SubCell"/>
</dbReference>
<dbReference type="GO" id="GO:0000774">
    <property type="term" value="F:adenyl-nucleotide exchange factor activity"/>
    <property type="evidence" value="ECO:0007669"/>
    <property type="project" value="InterPro"/>
</dbReference>
<dbReference type="GO" id="GO:0042803">
    <property type="term" value="F:protein homodimerization activity"/>
    <property type="evidence" value="ECO:0007669"/>
    <property type="project" value="InterPro"/>
</dbReference>
<dbReference type="GO" id="GO:0051087">
    <property type="term" value="F:protein-folding chaperone binding"/>
    <property type="evidence" value="ECO:0007669"/>
    <property type="project" value="InterPro"/>
</dbReference>
<dbReference type="GO" id="GO:0051082">
    <property type="term" value="F:unfolded protein binding"/>
    <property type="evidence" value="ECO:0007669"/>
    <property type="project" value="TreeGrafter"/>
</dbReference>
<dbReference type="GO" id="GO:0006457">
    <property type="term" value="P:protein folding"/>
    <property type="evidence" value="ECO:0007669"/>
    <property type="project" value="InterPro"/>
</dbReference>
<dbReference type="CDD" id="cd00446">
    <property type="entry name" value="GrpE"/>
    <property type="match status" value="1"/>
</dbReference>
<dbReference type="FunFam" id="2.30.22.10:FF:000001">
    <property type="entry name" value="Protein GrpE"/>
    <property type="match status" value="1"/>
</dbReference>
<dbReference type="FunFam" id="3.90.20.20:FF:000002">
    <property type="entry name" value="Protein GrpE"/>
    <property type="match status" value="1"/>
</dbReference>
<dbReference type="Gene3D" id="3.90.20.20">
    <property type="match status" value="1"/>
</dbReference>
<dbReference type="Gene3D" id="2.30.22.10">
    <property type="entry name" value="Head domain of nucleotide exchange factor GrpE"/>
    <property type="match status" value="1"/>
</dbReference>
<dbReference type="HAMAP" id="MF_01151">
    <property type="entry name" value="GrpE"/>
    <property type="match status" value="1"/>
</dbReference>
<dbReference type="InterPro" id="IPR000740">
    <property type="entry name" value="GrpE"/>
</dbReference>
<dbReference type="InterPro" id="IPR013805">
    <property type="entry name" value="GrpE_coiled_coil"/>
</dbReference>
<dbReference type="InterPro" id="IPR009012">
    <property type="entry name" value="GrpE_head"/>
</dbReference>
<dbReference type="NCBIfam" id="NF010738">
    <property type="entry name" value="PRK14140.1"/>
    <property type="match status" value="1"/>
</dbReference>
<dbReference type="PANTHER" id="PTHR21237">
    <property type="entry name" value="GRPE PROTEIN"/>
    <property type="match status" value="1"/>
</dbReference>
<dbReference type="PANTHER" id="PTHR21237:SF23">
    <property type="entry name" value="GRPE PROTEIN HOMOLOG, MITOCHONDRIAL"/>
    <property type="match status" value="1"/>
</dbReference>
<dbReference type="Pfam" id="PF01025">
    <property type="entry name" value="GrpE"/>
    <property type="match status" value="1"/>
</dbReference>
<dbReference type="PRINTS" id="PR00773">
    <property type="entry name" value="GRPEPROTEIN"/>
</dbReference>
<dbReference type="SUPFAM" id="SSF58014">
    <property type="entry name" value="Coiled-coil domain of nucleotide exchange factor GrpE"/>
    <property type="match status" value="1"/>
</dbReference>
<dbReference type="SUPFAM" id="SSF51064">
    <property type="entry name" value="Head domain of nucleotide exchange factor GrpE"/>
    <property type="match status" value="1"/>
</dbReference>
<dbReference type="PROSITE" id="PS01071">
    <property type="entry name" value="GRPE"/>
    <property type="match status" value="1"/>
</dbReference>
<protein>
    <recommendedName>
        <fullName evidence="1">Protein GrpE</fullName>
    </recommendedName>
    <alternativeName>
        <fullName evidence="1">HSP-70 cofactor</fullName>
    </alternativeName>
</protein>
<name>GRPE_STAAN</name>
<gene>
    <name evidence="1" type="primary">grpE</name>
    <name type="ordered locus">SA1410</name>
</gene>
<evidence type="ECO:0000255" key="1">
    <source>
        <dbReference type="HAMAP-Rule" id="MF_01151"/>
    </source>
</evidence>
<evidence type="ECO:0000256" key="2">
    <source>
        <dbReference type="SAM" id="MobiDB-lite"/>
    </source>
</evidence>